<proteinExistence type="evidence at protein level"/>
<gene>
    <name evidence="23" type="primary">Trpa1</name>
    <name evidence="19" type="synonym">Anktm1</name>
</gene>
<feature type="chain" id="PRO_0000215370" description="Transient receptor potential cation channel subfamily A member 1">
    <location>
        <begin position="1"/>
        <end position="1125"/>
    </location>
</feature>
<feature type="topological domain" description="Cytoplasmic" evidence="1">
    <location>
        <begin position="1"/>
        <end position="721"/>
    </location>
</feature>
<feature type="transmembrane region" description="Helical; Name=1" evidence="1">
    <location>
        <begin position="722"/>
        <end position="742"/>
    </location>
</feature>
<feature type="topological domain" description="Extracellular" evidence="1">
    <location>
        <begin position="743"/>
        <end position="767"/>
    </location>
</feature>
<feature type="transmembrane region" description="Helical; Name=2" evidence="1">
    <location>
        <begin position="768"/>
        <end position="788"/>
    </location>
</feature>
<feature type="topological domain" description="Cytoplasmic" evidence="1">
    <location>
        <begin position="789"/>
        <end position="806"/>
    </location>
</feature>
<feature type="transmembrane region" description="Helical; Name=3" evidence="1">
    <location>
        <begin position="807"/>
        <end position="827"/>
    </location>
</feature>
<feature type="topological domain" description="Extracellular" evidence="1">
    <location>
        <begin position="828"/>
        <end position="832"/>
    </location>
</feature>
<feature type="transmembrane region" description="Helical; Name=4" evidence="1">
    <location>
        <begin position="833"/>
        <end position="853"/>
    </location>
</feature>
<feature type="topological domain" description="Cytoplasmic" evidence="1">
    <location>
        <begin position="854"/>
        <end position="876"/>
    </location>
</feature>
<feature type="transmembrane region" description="Helical; Name=5" evidence="1 3">
    <location>
        <begin position="877"/>
        <end position="897"/>
    </location>
</feature>
<feature type="topological domain" description="Extracellular" evidence="1">
    <location>
        <begin position="898"/>
        <end position="904"/>
    </location>
</feature>
<feature type="intramembrane region" description="Pore-forming" evidence="1">
    <location>
        <begin position="905"/>
        <end position="925"/>
    </location>
</feature>
<feature type="topological domain" description="Extracellular" evidence="1">
    <location>
        <begin position="926"/>
        <end position="937"/>
    </location>
</feature>
<feature type="transmembrane region" description="Helical; Name=6" evidence="1">
    <location>
        <begin position="938"/>
        <end position="959"/>
    </location>
</feature>
<feature type="topological domain" description="Cytoplasmic" evidence="1">
    <location>
        <begin position="960"/>
        <end position="1125"/>
    </location>
</feature>
<feature type="repeat" description="ANK 1" evidence="3">
    <location>
        <begin position="63"/>
        <end position="94"/>
    </location>
</feature>
<feature type="repeat" description="ANK 2" evidence="3">
    <location>
        <begin position="98"/>
        <end position="127"/>
    </location>
</feature>
<feature type="repeat" description="ANK 3" evidence="3">
    <location>
        <begin position="131"/>
        <end position="161"/>
    </location>
</feature>
<feature type="repeat" description="ANK 4" evidence="3">
    <location>
        <begin position="165"/>
        <end position="194"/>
    </location>
</feature>
<feature type="repeat" description="ANK 5" evidence="3">
    <location>
        <begin position="198"/>
        <end position="227"/>
    </location>
</feature>
<feature type="repeat" description="ANK 6" evidence="3">
    <location>
        <begin position="239"/>
        <end position="268"/>
    </location>
</feature>
<feature type="repeat" description="ANK 7" evidence="3">
    <location>
        <begin position="272"/>
        <end position="301"/>
    </location>
</feature>
<feature type="repeat" description="ANK 8" evidence="3">
    <location>
        <begin position="309"/>
        <end position="338"/>
    </location>
</feature>
<feature type="repeat" description="ANK 9" evidence="3">
    <location>
        <begin position="342"/>
        <end position="371"/>
    </location>
</feature>
<feature type="repeat" description="ANK 10" evidence="3">
    <location>
        <begin position="413"/>
        <end position="442"/>
    </location>
</feature>
<feature type="repeat" description="ANK 11" evidence="3">
    <location>
        <begin position="446"/>
        <end position="475"/>
    </location>
</feature>
<feature type="repeat" description="ANK 12" evidence="3">
    <location>
        <begin position="482"/>
        <end position="511"/>
    </location>
</feature>
<feature type="repeat" description="ANK 13" evidence="3">
    <location>
        <begin position="514"/>
        <end position="543"/>
    </location>
</feature>
<feature type="repeat" description="ANK 14" evidence="3">
    <location>
        <begin position="548"/>
        <end position="577"/>
    </location>
</feature>
<feature type="coiled-coil region" evidence="1">
    <location>
        <begin position="1044"/>
        <end position="1073"/>
    </location>
</feature>
<feature type="binding site" description="covalent" evidence="22">
    <location>
        <position position="415"/>
    </location>
    <ligand>
        <name>(E)-cinnamaldehyde</name>
        <dbReference type="ChEBI" id="CHEBI:16731"/>
        <note>agonist</note>
    </ligand>
</feature>
<feature type="binding site" description="covalent" evidence="22">
    <location>
        <position position="422"/>
    </location>
    <ligand>
        <name>(E)-cinnamaldehyde</name>
        <dbReference type="ChEBI" id="CHEBI:16731"/>
        <note>agonist</note>
    </ligand>
</feature>
<feature type="binding site" description="covalent; Cys highly reactive" evidence="1 22">
    <location>
        <position position="622"/>
    </location>
    <ligand>
        <name>(E)-cinnamaldehyde</name>
        <dbReference type="ChEBI" id="CHEBI:16731"/>
        <note>agonist</note>
    </ligand>
</feature>
<feature type="binding site" description="covalent" evidence="1">
    <location>
        <position position="642"/>
    </location>
    <ligand>
        <name>(E)-cinnamaldehyde</name>
        <dbReference type="ChEBI" id="CHEBI:16731"/>
        <note>agonist</note>
    </ligand>
</feature>
<feature type="binding site" description="covalent" evidence="1">
    <location>
        <position position="666"/>
    </location>
    <ligand>
        <name>(E)-cinnamaldehyde</name>
        <dbReference type="ChEBI" id="CHEBI:16731"/>
        <note>agonist</note>
    </ligand>
</feature>
<feature type="binding site" description="covalent" evidence="1">
    <location>
        <position position="712"/>
    </location>
    <ligand>
        <name>(E)-cinnamaldehyde</name>
        <dbReference type="ChEBI" id="CHEBI:16731"/>
        <note>agonist</note>
    </ligand>
</feature>
<feature type="binding site" evidence="1">
    <location>
        <position position="791"/>
    </location>
    <ligand>
        <name>Ca(2+)</name>
        <dbReference type="ChEBI" id="CHEBI:29108"/>
    </ligand>
</feature>
<feature type="binding site" evidence="1">
    <location>
        <position position="794"/>
    </location>
    <ligand>
        <name>Ca(2+)</name>
        <dbReference type="ChEBI" id="CHEBI:29108"/>
    </ligand>
</feature>
<feature type="binding site" evidence="1">
    <location>
        <position position="808"/>
    </location>
    <ligand>
        <name>Ca(2+)</name>
        <dbReference type="ChEBI" id="CHEBI:29108"/>
    </ligand>
</feature>
<feature type="binding site" evidence="1">
    <location>
        <position position="811"/>
    </location>
    <ligand>
        <name>Ca(2+)</name>
        <dbReference type="ChEBI" id="CHEBI:29108"/>
    </ligand>
</feature>
<feature type="binding site" evidence="1">
    <location>
        <begin position="1048"/>
        <end position="1054"/>
    </location>
    <ligand>
        <name>a 1,2-diacyl-sn-glycero-3-phospho-(1D-myo-inositol)</name>
        <dbReference type="ChEBI" id="CHEBI:57880"/>
    </ligand>
</feature>
<feature type="site" description="Essential for electrophile activation. Sensor for electrophilic agents" evidence="1">
    <location>
        <position position="622"/>
    </location>
</feature>
<feature type="site" description="Key residue for activation by the scorpion wasabi receptor toxin" evidence="1">
    <location>
        <position position="623"/>
    </location>
</feature>
<feature type="site" description="Important residue for activation by the scorpion wasabi receptor toxin" evidence="1">
    <location>
        <position position="635"/>
    </location>
</feature>
<feature type="site" description="Important residue for activation by the scorpion wasabi receptor toxin" evidence="1">
    <location>
        <position position="647"/>
    </location>
</feature>
<feature type="site" description="Crucial for calcium permeation" evidence="2">
    <location>
        <position position="918"/>
    </location>
</feature>
<feature type="modified residue" description="4-hydroxyproline; transient" evidence="1">
    <location>
        <position position="395"/>
    </location>
</feature>
<feature type="modified residue" description="Cysteine sulfenic acid (-SOH); transient; in hyperoxia" evidence="1">
    <location>
        <position position="634"/>
    </location>
</feature>
<feature type="modified residue" description="Cysteine sulfenic acid (-SOH); transient; in hyperoxia" evidence="1">
    <location>
        <position position="859"/>
    </location>
</feature>
<feature type="glycosylation site" description="N-linked (GlcNAc...) asparagine" evidence="3">
    <location>
        <position position="749"/>
    </location>
</feature>
<feature type="glycosylation site" description="N-linked (GlcNAc...) asparagine" evidence="3">
    <location>
        <position position="755"/>
    </location>
</feature>
<feature type="disulfide bond" description="Alternate" evidence="14">
    <location>
        <begin position="193"/>
        <end position="666"/>
    </location>
</feature>
<feature type="disulfide bond" description="Alternate" evidence="14">
    <location>
        <begin position="463"/>
        <end position="666"/>
    </location>
</feature>
<feature type="disulfide bond" description="Alternate" evidence="14">
    <location>
        <begin position="609"/>
        <end position="622"/>
    </location>
</feature>
<feature type="disulfide bond" description="Alternate" evidence="14">
    <location>
        <begin position="622"/>
        <end position="666"/>
    </location>
</feature>
<feature type="disulfide bond" description="Alternate; transient; in hyperoxia; unknown whether inter- or intrachain" evidence="1">
    <location>
        <begin position="634"/>
        <end position="859"/>
    </location>
</feature>
<feature type="mutagenesis site" description="Very important decrease in cinnamaldehyde or cold-evoked response." evidence="10">
    <original>C</original>
    <variation>S</variation>
    <location>
        <position position="415"/>
    </location>
</feature>
<feature type="mutagenesis site" description="Important decrease in cinnamaldehyde or cold-evoked response." evidence="10">
    <original>C</original>
    <variation>S</variation>
    <location>
        <position position="422"/>
    </location>
</feature>
<feature type="mutagenesis site" description="Almost complete loss in cinnamaldehyde or cold-evoked response." evidence="10">
    <original>C</original>
    <variation>S</variation>
    <location>
        <position position="622"/>
    </location>
</feature>
<keyword id="KW-0040">ANK repeat</keyword>
<keyword id="KW-0106">Calcium</keyword>
<keyword id="KW-0107">Calcium channel</keyword>
<keyword id="KW-0109">Calcium transport</keyword>
<keyword id="KW-1003">Cell membrane</keyword>
<keyword id="KW-0175">Coiled coil</keyword>
<keyword id="KW-1015">Disulfide bond</keyword>
<keyword id="KW-0325">Glycoprotein</keyword>
<keyword id="KW-0379">Hydroxylation</keyword>
<keyword id="KW-0407">Ion channel</keyword>
<keyword id="KW-0406">Ion transport</keyword>
<keyword id="KW-0472">Membrane</keyword>
<keyword id="KW-0479">Metal-binding</keyword>
<keyword id="KW-0558">Oxidation</keyword>
<keyword id="KW-1185">Reference proteome</keyword>
<keyword id="KW-0677">Repeat</keyword>
<keyword id="KW-0716">Sensory transduction</keyword>
<keyword id="KW-0812">Transmembrane</keyword>
<keyword id="KW-1133">Transmembrane helix</keyword>
<keyword id="KW-0813">Transport</keyword>
<accession>Q8BLA8</accession>
<accession>Q0VBN5</accession>
<dbReference type="EMBL" id="AY231177">
    <property type="protein sequence ID" value="AAO43183.1"/>
    <property type="molecule type" value="mRNA"/>
</dbReference>
<dbReference type="EMBL" id="AK045771">
    <property type="protein sequence ID" value="BAC32487.1"/>
    <property type="molecule type" value="mRNA"/>
</dbReference>
<dbReference type="EMBL" id="BC120563">
    <property type="protein sequence ID" value="AAI20564.1"/>
    <property type="molecule type" value="mRNA"/>
</dbReference>
<dbReference type="EMBL" id="BC131963">
    <property type="protein sequence ID" value="AAI31964.1"/>
    <property type="molecule type" value="mRNA"/>
</dbReference>
<dbReference type="CCDS" id="CCDS35516.1"/>
<dbReference type="RefSeq" id="NP_001335217.1">
    <property type="nucleotide sequence ID" value="NM_001348288.1"/>
</dbReference>
<dbReference type="RefSeq" id="NP_808449.1">
    <property type="nucleotide sequence ID" value="NM_177781.5"/>
</dbReference>
<dbReference type="SMR" id="Q8BLA8"/>
<dbReference type="BioGRID" id="234929">
    <property type="interactions" value="1"/>
</dbReference>
<dbReference type="CORUM" id="Q8BLA8"/>
<dbReference type="DIP" id="DIP-61521N"/>
<dbReference type="FunCoup" id="Q8BLA8">
    <property type="interactions" value="208"/>
</dbReference>
<dbReference type="STRING" id="10090.ENSMUSP00000043594"/>
<dbReference type="BindingDB" id="Q8BLA8"/>
<dbReference type="ChEMBL" id="CHEMBL1075310"/>
<dbReference type="DrugCentral" id="Q8BLA8"/>
<dbReference type="GuidetoPHARMACOLOGY" id="485"/>
<dbReference type="TCDB" id="1.A.4.6.1">
    <property type="family name" value="the transient receptor potential ca2+/cation channel (trp-cc) family"/>
</dbReference>
<dbReference type="GlyCosmos" id="Q8BLA8">
    <property type="glycosylation" value="2 sites, No reported glycans"/>
</dbReference>
<dbReference type="GlyGen" id="Q8BLA8">
    <property type="glycosylation" value="2 sites"/>
</dbReference>
<dbReference type="iPTMnet" id="Q8BLA8"/>
<dbReference type="PhosphoSitePlus" id="Q8BLA8"/>
<dbReference type="SwissPalm" id="Q8BLA8"/>
<dbReference type="PaxDb" id="10090-ENSMUSP00000043594"/>
<dbReference type="ProteomicsDB" id="258855"/>
<dbReference type="Antibodypedia" id="12262">
    <property type="antibodies" value="304 antibodies from 32 providers"/>
</dbReference>
<dbReference type="DNASU" id="277328"/>
<dbReference type="Ensembl" id="ENSMUST00000041447.5">
    <property type="protein sequence ID" value="ENSMUSP00000043594.5"/>
    <property type="gene ID" value="ENSMUSG00000032769.6"/>
</dbReference>
<dbReference type="GeneID" id="277328"/>
<dbReference type="KEGG" id="mmu:277328"/>
<dbReference type="UCSC" id="uc007ajc.1">
    <property type="organism name" value="mouse"/>
</dbReference>
<dbReference type="AGR" id="MGI:3522699"/>
<dbReference type="CTD" id="8989"/>
<dbReference type="MGI" id="MGI:3522699">
    <property type="gene designation" value="Trpa1"/>
</dbReference>
<dbReference type="VEuPathDB" id="HostDB:ENSMUSG00000032769"/>
<dbReference type="eggNOG" id="KOG0510">
    <property type="taxonomic scope" value="Eukaryota"/>
</dbReference>
<dbReference type="GeneTree" id="ENSGT00940000156118"/>
<dbReference type="HOGENOM" id="CLU_006750_0_0_1"/>
<dbReference type="InParanoid" id="Q8BLA8"/>
<dbReference type="OMA" id="HWATEKN"/>
<dbReference type="OrthoDB" id="1661883at2759"/>
<dbReference type="PhylomeDB" id="Q8BLA8"/>
<dbReference type="TreeFam" id="TF317264"/>
<dbReference type="Reactome" id="R-MMU-3295583">
    <property type="pathway name" value="TRP channels"/>
</dbReference>
<dbReference type="BioGRID-ORCS" id="277328">
    <property type="hits" value="3 hits in 80 CRISPR screens"/>
</dbReference>
<dbReference type="PRO" id="PR:Q8BLA8"/>
<dbReference type="Proteomes" id="UP000000589">
    <property type="component" value="Chromosome 1"/>
</dbReference>
<dbReference type="RNAct" id="Q8BLA8">
    <property type="molecule type" value="protein"/>
</dbReference>
<dbReference type="Bgee" id="ENSMUSG00000032769">
    <property type="expression patterns" value="Expressed in lumbar dorsal root ganglion and 20 other cell types or tissues"/>
</dbReference>
<dbReference type="ExpressionAtlas" id="Q8BLA8">
    <property type="expression patterns" value="baseline and differential"/>
</dbReference>
<dbReference type="GO" id="GO:0016324">
    <property type="term" value="C:apical plasma membrane"/>
    <property type="evidence" value="ECO:0007669"/>
    <property type="project" value="Ensembl"/>
</dbReference>
<dbReference type="GO" id="GO:0030424">
    <property type="term" value="C:axon"/>
    <property type="evidence" value="ECO:0007669"/>
    <property type="project" value="Ensembl"/>
</dbReference>
<dbReference type="GO" id="GO:0016020">
    <property type="term" value="C:membrane"/>
    <property type="evidence" value="ECO:0000250"/>
    <property type="project" value="MGI"/>
</dbReference>
<dbReference type="GO" id="GO:0005886">
    <property type="term" value="C:plasma membrane"/>
    <property type="evidence" value="ECO:0000314"/>
    <property type="project" value="MGI"/>
</dbReference>
<dbReference type="GO" id="GO:0032421">
    <property type="term" value="C:stereocilium bundle"/>
    <property type="evidence" value="ECO:0000314"/>
    <property type="project" value="MGI"/>
</dbReference>
<dbReference type="GO" id="GO:0005262">
    <property type="term" value="F:calcium channel activity"/>
    <property type="evidence" value="ECO:0000314"/>
    <property type="project" value="MGI"/>
</dbReference>
<dbReference type="GO" id="GO:0015267">
    <property type="term" value="F:channel activity"/>
    <property type="evidence" value="ECO:0000314"/>
    <property type="project" value="MGI"/>
</dbReference>
<dbReference type="GO" id="GO:0042802">
    <property type="term" value="F:identical protein binding"/>
    <property type="evidence" value="ECO:0007669"/>
    <property type="project" value="Ensembl"/>
</dbReference>
<dbReference type="GO" id="GO:0015278">
    <property type="term" value="F:intracellularly gated calcium channel activity"/>
    <property type="evidence" value="ECO:0000250"/>
    <property type="project" value="UniProtKB"/>
</dbReference>
<dbReference type="GO" id="GO:0046872">
    <property type="term" value="F:metal ion binding"/>
    <property type="evidence" value="ECO:0007669"/>
    <property type="project" value="UniProtKB-KW"/>
</dbReference>
<dbReference type="GO" id="GO:0005216">
    <property type="term" value="F:monoatomic ion channel activity"/>
    <property type="evidence" value="ECO:0000314"/>
    <property type="project" value="MGI"/>
</dbReference>
<dbReference type="GO" id="GO:1990760">
    <property type="term" value="F:osmolarity-sensing monoatomic cation channel activity"/>
    <property type="evidence" value="ECO:0007669"/>
    <property type="project" value="Ensembl"/>
</dbReference>
<dbReference type="GO" id="GO:0097604">
    <property type="term" value="F:temperature-gated cation channel activity"/>
    <property type="evidence" value="ECO:0000250"/>
    <property type="project" value="UniProtKB"/>
</dbReference>
<dbReference type="GO" id="GO:0005245">
    <property type="term" value="F:voltage-gated calcium channel activity"/>
    <property type="evidence" value="ECO:0007669"/>
    <property type="project" value="Ensembl"/>
</dbReference>
<dbReference type="GO" id="GO:0097553">
    <property type="term" value="P:calcium ion transmembrane import into cytosol"/>
    <property type="evidence" value="ECO:0007669"/>
    <property type="project" value="Ensembl"/>
</dbReference>
<dbReference type="GO" id="GO:0006816">
    <property type="term" value="P:calcium ion transport"/>
    <property type="evidence" value="ECO:0000314"/>
    <property type="project" value="MGI"/>
</dbReference>
<dbReference type="GO" id="GO:0007166">
    <property type="term" value="P:cell surface receptor signaling pathway"/>
    <property type="evidence" value="ECO:0000315"/>
    <property type="project" value="BHF-UCL"/>
</dbReference>
<dbReference type="GO" id="GO:0071313">
    <property type="term" value="P:cellular response to caffeine"/>
    <property type="evidence" value="ECO:0007669"/>
    <property type="project" value="Ensembl"/>
</dbReference>
<dbReference type="GO" id="GO:0071244">
    <property type="term" value="P:cellular response to carbon dioxide"/>
    <property type="evidence" value="ECO:0007669"/>
    <property type="project" value="Ensembl"/>
</dbReference>
<dbReference type="GO" id="GO:0070417">
    <property type="term" value="P:cellular response to cold"/>
    <property type="evidence" value="ECO:0007669"/>
    <property type="project" value="Ensembl"/>
</dbReference>
<dbReference type="GO" id="GO:0071240">
    <property type="term" value="P:cellular response to food"/>
    <property type="evidence" value="ECO:0000315"/>
    <property type="project" value="BHF-UCL"/>
</dbReference>
<dbReference type="GO" id="GO:0034605">
    <property type="term" value="P:cellular response to heat"/>
    <property type="evidence" value="ECO:0007669"/>
    <property type="project" value="Ensembl"/>
</dbReference>
<dbReference type="GO" id="GO:0070301">
    <property type="term" value="P:cellular response to hydrogen peroxide"/>
    <property type="evidence" value="ECO:0000266"/>
    <property type="project" value="MGI"/>
</dbReference>
<dbReference type="GO" id="GO:0097237">
    <property type="term" value="P:cellular response to toxic substance"/>
    <property type="evidence" value="ECO:0000314"/>
    <property type="project" value="MGI"/>
</dbReference>
<dbReference type="GO" id="GO:0050968">
    <property type="term" value="P:detection of chemical stimulus involved in sensory perception of pain"/>
    <property type="evidence" value="ECO:0000314"/>
    <property type="project" value="MGI"/>
</dbReference>
<dbReference type="GO" id="GO:0050974">
    <property type="term" value="P:detection of mechanical stimulus involved in sensory perception"/>
    <property type="evidence" value="ECO:0000315"/>
    <property type="project" value="MGI"/>
</dbReference>
<dbReference type="GO" id="GO:0050966">
    <property type="term" value="P:detection of mechanical stimulus involved in sensory perception of pain"/>
    <property type="evidence" value="ECO:0000315"/>
    <property type="project" value="MGI"/>
</dbReference>
<dbReference type="GO" id="GO:0006874">
    <property type="term" value="P:intracellular calcium ion homeostasis"/>
    <property type="evidence" value="ECO:0000315"/>
    <property type="project" value="MGI"/>
</dbReference>
<dbReference type="GO" id="GO:0035774">
    <property type="term" value="P:positive regulation of insulin secretion involved in cellular response to glucose stimulus"/>
    <property type="evidence" value="ECO:0007669"/>
    <property type="project" value="Ensembl"/>
</dbReference>
<dbReference type="GO" id="GO:1903793">
    <property type="term" value="P:positive regulation of monoatomic anion transport"/>
    <property type="evidence" value="ECO:0007669"/>
    <property type="project" value="Ensembl"/>
</dbReference>
<dbReference type="GO" id="GO:0051289">
    <property type="term" value="P:protein homotetramerization"/>
    <property type="evidence" value="ECO:0000250"/>
    <property type="project" value="UniProtKB"/>
</dbReference>
<dbReference type="GO" id="GO:1903522">
    <property type="term" value="P:regulation of blood circulation"/>
    <property type="evidence" value="ECO:0007669"/>
    <property type="project" value="Ensembl"/>
</dbReference>
<dbReference type="GO" id="GO:0098908">
    <property type="term" value="P:regulation of neuronal action potential"/>
    <property type="evidence" value="ECO:0007669"/>
    <property type="project" value="Ensembl"/>
</dbReference>
<dbReference type="GO" id="GO:0009409">
    <property type="term" value="P:response to cold"/>
    <property type="evidence" value="ECO:0000314"/>
    <property type="project" value="MGI"/>
</dbReference>
<dbReference type="GO" id="GO:0042542">
    <property type="term" value="P:response to hydrogen peroxide"/>
    <property type="evidence" value="ECO:0000315"/>
    <property type="project" value="MGI"/>
</dbReference>
<dbReference type="GO" id="GO:0048265">
    <property type="term" value="P:response to pain"/>
    <property type="evidence" value="ECO:0000314"/>
    <property type="project" value="MGI"/>
</dbReference>
<dbReference type="GO" id="GO:0009410">
    <property type="term" value="P:response to xenobiotic stimulus"/>
    <property type="evidence" value="ECO:0000314"/>
    <property type="project" value="MGI"/>
</dbReference>
<dbReference type="GO" id="GO:0050955">
    <property type="term" value="P:thermoception"/>
    <property type="evidence" value="ECO:0000314"/>
    <property type="project" value="MGI"/>
</dbReference>
<dbReference type="GO" id="GO:0014832">
    <property type="term" value="P:urinary bladder smooth muscle contraction"/>
    <property type="evidence" value="ECO:0007669"/>
    <property type="project" value="Ensembl"/>
</dbReference>
<dbReference type="FunFam" id="1.25.40.20:FF:000272">
    <property type="entry name" value="Transient receptor potential cation channel subfamily A member 1"/>
    <property type="match status" value="1"/>
</dbReference>
<dbReference type="Gene3D" id="1.25.40.20">
    <property type="entry name" value="Ankyrin repeat-containing domain"/>
    <property type="match status" value="4"/>
</dbReference>
<dbReference type="InterPro" id="IPR002110">
    <property type="entry name" value="Ankyrin_rpt"/>
</dbReference>
<dbReference type="InterPro" id="IPR036770">
    <property type="entry name" value="Ankyrin_rpt-contain_sf"/>
</dbReference>
<dbReference type="InterPro" id="IPR005821">
    <property type="entry name" value="Ion_trans_dom"/>
</dbReference>
<dbReference type="InterPro" id="IPR052076">
    <property type="entry name" value="TRP_cation_channel"/>
</dbReference>
<dbReference type="PANTHER" id="PTHR47143:SF1">
    <property type="entry name" value="ION_TRANS DOMAIN-CONTAINING PROTEIN"/>
    <property type="match status" value="1"/>
</dbReference>
<dbReference type="PANTHER" id="PTHR47143">
    <property type="entry name" value="TRANSIENT RECEPTOR POTENTIAL CATION CHANNEL PROTEIN PAINLESS"/>
    <property type="match status" value="1"/>
</dbReference>
<dbReference type="Pfam" id="PF12796">
    <property type="entry name" value="Ank_2"/>
    <property type="match status" value="5"/>
</dbReference>
<dbReference type="Pfam" id="PF13606">
    <property type="entry name" value="Ank_3"/>
    <property type="match status" value="1"/>
</dbReference>
<dbReference type="Pfam" id="PF00520">
    <property type="entry name" value="Ion_trans"/>
    <property type="match status" value="1"/>
</dbReference>
<dbReference type="PRINTS" id="PR01415">
    <property type="entry name" value="ANKYRIN"/>
</dbReference>
<dbReference type="SMART" id="SM00248">
    <property type="entry name" value="ANK"/>
    <property type="match status" value="14"/>
</dbReference>
<dbReference type="SUPFAM" id="SSF48403">
    <property type="entry name" value="Ankyrin repeat"/>
    <property type="match status" value="2"/>
</dbReference>
<dbReference type="PROSITE" id="PS50297">
    <property type="entry name" value="ANK_REP_REGION"/>
    <property type="match status" value="1"/>
</dbReference>
<dbReference type="PROSITE" id="PS50088">
    <property type="entry name" value="ANK_REPEAT"/>
    <property type="match status" value="9"/>
</dbReference>
<reference key="1">
    <citation type="journal article" date="2003" name="Cell">
        <title>ANKTM1, a TRP-like channel expressed in nociceptive neurons, is activated by cold temperatures.</title>
        <authorList>
            <person name="Story G.M."/>
            <person name="Peier A.M."/>
            <person name="Reeve A.J."/>
            <person name="Eid S.R."/>
            <person name="Mosbacher J."/>
            <person name="Hricik T.R."/>
            <person name="Earley T.J."/>
            <person name="Hergarden A.C."/>
            <person name="Anderson D.A."/>
            <person name="Hwang S.W."/>
            <person name="McIntyre P."/>
            <person name="Jegla T."/>
            <person name="Bevan S."/>
            <person name="Patapoutian A."/>
        </authorList>
    </citation>
    <scope>NUCLEOTIDE SEQUENCE [MRNA]</scope>
    <scope>FUNCTION</scope>
    <scope>TISSUE SPECIFICITY</scope>
    <scope>SUBCELLULAR LOCATION</scope>
    <source>
        <strain>C57BL/6J</strain>
    </source>
</reference>
<reference key="2">
    <citation type="journal article" date="2005" name="Science">
        <title>The transcriptional landscape of the mammalian genome.</title>
        <authorList>
            <person name="Carninci P."/>
            <person name="Kasukawa T."/>
            <person name="Katayama S."/>
            <person name="Gough J."/>
            <person name="Frith M.C."/>
            <person name="Maeda N."/>
            <person name="Oyama R."/>
            <person name="Ravasi T."/>
            <person name="Lenhard B."/>
            <person name="Wells C."/>
            <person name="Kodzius R."/>
            <person name="Shimokawa K."/>
            <person name="Bajic V.B."/>
            <person name="Brenner S.E."/>
            <person name="Batalov S."/>
            <person name="Forrest A.R."/>
            <person name="Zavolan M."/>
            <person name="Davis M.J."/>
            <person name="Wilming L.G."/>
            <person name="Aidinis V."/>
            <person name="Allen J.E."/>
            <person name="Ambesi-Impiombato A."/>
            <person name="Apweiler R."/>
            <person name="Aturaliya R.N."/>
            <person name="Bailey T.L."/>
            <person name="Bansal M."/>
            <person name="Baxter L."/>
            <person name="Beisel K.W."/>
            <person name="Bersano T."/>
            <person name="Bono H."/>
            <person name="Chalk A.M."/>
            <person name="Chiu K.P."/>
            <person name="Choudhary V."/>
            <person name="Christoffels A."/>
            <person name="Clutterbuck D.R."/>
            <person name="Crowe M.L."/>
            <person name="Dalla E."/>
            <person name="Dalrymple B.P."/>
            <person name="de Bono B."/>
            <person name="Della Gatta G."/>
            <person name="di Bernardo D."/>
            <person name="Down T."/>
            <person name="Engstrom P."/>
            <person name="Fagiolini M."/>
            <person name="Faulkner G."/>
            <person name="Fletcher C.F."/>
            <person name="Fukushima T."/>
            <person name="Furuno M."/>
            <person name="Futaki S."/>
            <person name="Gariboldi M."/>
            <person name="Georgii-Hemming P."/>
            <person name="Gingeras T.R."/>
            <person name="Gojobori T."/>
            <person name="Green R.E."/>
            <person name="Gustincich S."/>
            <person name="Harbers M."/>
            <person name="Hayashi Y."/>
            <person name="Hensch T.K."/>
            <person name="Hirokawa N."/>
            <person name="Hill D."/>
            <person name="Huminiecki L."/>
            <person name="Iacono M."/>
            <person name="Ikeo K."/>
            <person name="Iwama A."/>
            <person name="Ishikawa T."/>
            <person name="Jakt M."/>
            <person name="Kanapin A."/>
            <person name="Katoh M."/>
            <person name="Kawasawa Y."/>
            <person name="Kelso J."/>
            <person name="Kitamura H."/>
            <person name="Kitano H."/>
            <person name="Kollias G."/>
            <person name="Krishnan S.P."/>
            <person name="Kruger A."/>
            <person name="Kummerfeld S.K."/>
            <person name="Kurochkin I.V."/>
            <person name="Lareau L.F."/>
            <person name="Lazarevic D."/>
            <person name="Lipovich L."/>
            <person name="Liu J."/>
            <person name="Liuni S."/>
            <person name="McWilliam S."/>
            <person name="Madan Babu M."/>
            <person name="Madera M."/>
            <person name="Marchionni L."/>
            <person name="Matsuda H."/>
            <person name="Matsuzawa S."/>
            <person name="Miki H."/>
            <person name="Mignone F."/>
            <person name="Miyake S."/>
            <person name="Morris K."/>
            <person name="Mottagui-Tabar S."/>
            <person name="Mulder N."/>
            <person name="Nakano N."/>
            <person name="Nakauchi H."/>
            <person name="Ng P."/>
            <person name="Nilsson R."/>
            <person name="Nishiguchi S."/>
            <person name="Nishikawa S."/>
            <person name="Nori F."/>
            <person name="Ohara O."/>
            <person name="Okazaki Y."/>
            <person name="Orlando V."/>
            <person name="Pang K.C."/>
            <person name="Pavan W.J."/>
            <person name="Pavesi G."/>
            <person name="Pesole G."/>
            <person name="Petrovsky N."/>
            <person name="Piazza S."/>
            <person name="Reed J."/>
            <person name="Reid J.F."/>
            <person name="Ring B.Z."/>
            <person name="Ringwald M."/>
            <person name="Rost B."/>
            <person name="Ruan Y."/>
            <person name="Salzberg S.L."/>
            <person name="Sandelin A."/>
            <person name="Schneider C."/>
            <person name="Schoenbach C."/>
            <person name="Sekiguchi K."/>
            <person name="Semple C.A."/>
            <person name="Seno S."/>
            <person name="Sessa L."/>
            <person name="Sheng Y."/>
            <person name="Shibata Y."/>
            <person name="Shimada H."/>
            <person name="Shimada K."/>
            <person name="Silva D."/>
            <person name="Sinclair B."/>
            <person name="Sperling S."/>
            <person name="Stupka E."/>
            <person name="Sugiura K."/>
            <person name="Sultana R."/>
            <person name="Takenaka Y."/>
            <person name="Taki K."/>
            <person name="Tammoja K."/>
            <person name="Tan S.L."/>
            <person name="Tang S."/>
            <person name="Taylor M.S."/>
            <person name="Tegner J."/>
            <person name="Teichmann S.A."/>
            <person name="Ueda H.R."/>
            <person name="van Nimwegen E."/>
            <person name="Verardo R."/>
            <person name="Wei C.L."/>
            <person name="Yagi K."/>
            <person name="Yamanishi H."/>
            <person name="Zabarovsky E."/>
            <person name="Zhu S."/>
            <person name="Zimmer A."/>
            <person name="Hide W."/>
            <person name="Bult C."/>
            <person name="Grimmond S.M."/>
            <person name="Teasdale R.D."/>
            <person name="Liu E.T."/>
            <person name="Brusic V."/>
            <person name="Quackenbush J."/>
            <person name="Wahlestedt C."/>
            <person name="Mattick J.S."/>
            <person name="Hume D.A."/>
            <person name="Kai C."/>
            <person name="Sasaki D."/>
            <person name="Tomaru Y."/>
            <person name="Fukuda S."/>
            <person name="Kanamori-Katayama M."/>
            <person name="Suzuki M."/>
            <person name="Aoki J."/>
            <person name="Arakawa T."/>
            <person name="Iida J."/>
            <person name="Imamura K."/>
            <person name="Itoh M."/>
            <person name="Kato T."/>
            <person name="Kawaji H."/>
            <person name="Kawagashira N."/>
            <person name="Kawashima T."/>
            <person name="Kojima M."/>
            <person name="Kondo S."/>
            <person name="Konno H."/>
            <person name="Nakano K."/>
            <person name="Ninomiya N."/>
            <person name="Nishio T."/>
            <person name="Okada M."/>
            <person name="Plessy C."/>
            <person name="Shibata K."/>
            <person name="Shiraki T."/>
            <person name="Suzuki S."/>
            <person name="Tagami M."/>
            <person name="Waki K."/>
            <person name="Watahiki A."/>
            <person name="Okamura-Oho Y."/>
            <person name="Suzuki H."/>
            <person name="Kawai J."/>
            <person name="Hayashizaki Y."/>
        </authorList>
    </citation>
    <scope>NUCLEOTIDE SEQUENCE [LARGE SCALE MRNA]</scope>
    <source>
        <strain>C57BL/6J</strain>
        <tissue>Corpora quadrigemina</tissue>
    </source>
</reference>
<reference key="3">
    <citation type="journal article" date="2004" name="Genome Res.">
        <title>The status, quality, and expansion of the NIH full-length cDNA project: the Mammalian Gene Collection (MGC).</title>
        <authorList>
            <consortium name="The MGC Project Team"/>
        </authorList>
    </citation>
    <scope>NUCLEOTIDE SEQUENCE [LARGE SCALE MRNA]</scope>
    <source>
        <tissue>Brain</tissue>
    </source>
</reference>
<reference key="4">
    <citation type="journal article" date="2004" name="Nature">
        <title>TRPA1 is a candidate for the mechanosensitive transduction channel of vertebrate hair cells.</title>
        <authorList>
            <person name="Corey D.P."/>
            <person name="Garcia-Anoveros J."/>
            <person name="Holt J.R."/>
            <person name="Kwan K.Y."/>
            <person name="Lin S.-Y."/>
            <person name="Vollrath M.A."/>
            <person name="Amalfitano A."/>
            <person name="Cheung E.-L.M."/>
            <person name="Derfler B.H."/>
            <person name="Duggan A."/>
            <person name="Geleoc G.S.G."/>
            <person name="Gray P.A."/>
            <person name="Hoffman M.P."/>
            <person name="Rehm H.L."/>
            <person name="Tamasauskas D."/>
            <person name="Zhang D.-S."/>
        </authorList>
    </citation>
    <scope>FUNCTION</scope>
    <scope>SUBCELLULAR LOCATION</scope>
    <scope>TISSUE SPECIFICITY</scope>
    <scope>DEVELOPMENTAL STAGE</scope>
</reference>
<reference key="5">
    <citation type="journal article" date="2004" name="NeuroReport">
        <title>Cold-sensitive, menthol-insensitive neurons in the murine sympathetic nervous system.</title>
        <authorList>
            <person name="Smith M.P."/>
            <person name="Beacham D."/>
            <person name="Ensor E."/>
            <person name="Koltzenburg M."/>
        </authorList>
    </citation>
    <scope>TISSUE SPECIFICITY</scope>
</reference>
<reference key="6">
    <citation type="journal article" date="2004" name="Neuron">
        <title>Noxious cold ion channel TRPA1 is activated by pungent compounds and bradykinin.</title>
        <authorList>
            <person name="Bandell M."/>
            <person name="Story G.M."/>
            <person name="Hwang S.W."/>
            <person name="Viswanath V."/>
            <person name="Eid S.R."/>
            <person name="Petrus M.J."/>
            <person name="Earley T.J."/>
            <person name="Patapoutian A."/>
        </authorList>
    </citation>
    <scope>FUNCTION</scope>
    <scope>SUBCELLULAR LOCATION</scope>
</reference>
<reference key="7">
    <citation type="journal article" date="2005" name="J. Neurosci.">
        <title>Nociceptor and hair cell transducer properties of TRPA1, a channel for pain and hearing.</title>
        <authorList>
            <person name="Nagata K."/>
            <person name="Duggan A."/>
            <person name="Kumar G."/>
            <person name="Garcia-Anoveros J."/>
        </authorList>
    </citation>
    <scope>FUNCTION</scope>
    <scope>SUBCELLULAR LOCATION</scope>
    <scope>ACTIVITY REGULATION</scope>
    <scope>TISSUE SPECIFICITY</scope>
</reference>
<reference key="8">
    <citation type="journal article" date="2006" name="Cell">
        <title>TRPA1 mediates the inflammatory actions of environmental irritants and proalgesic agents.</title>
        <authorList>
            <person name="Bautista D.M."/>
            <person name="Jordt S.E."/>
            <person name="Nikai T."/>
            <person name="Tsuruda P.R."/>
            <person name="Read A.J."/>
            <person name="Poblete J."/>
            <person name="Yamoah E.N."/>
            <person name="Basbaum A.I."/>
            <person name="Julius D."/>
        </authorList>
    </citation>
    <scope>FUNCTION</scope>
    <scope>DISRUPTION PHENOTYPE</scope>
</reference>
<reference key="9">
    <citation type="journal article" date="2007" name="J. Neurosci.">
        <title>Requirement of a soluble intracellular factor for activation of transient receptor potential A1 by pungent chemicals: role of inorganic polyphosphates.</title>
        <authorList>
            <person name="Kim D."/>
            <person name="Cavanaugh E.J."/>
        </authorList>
    </citation>
    <scope>ACTIVITY REGULATION</scope>
</reference>
<reference key="10">
    <citation type="journal article" date="2007" name="Nature">
        <title>Noxious compounds activate TRPA1 ion channels through covalent modification of cysteines.</title>
        <authorList>
            <person name="Macpherson L.J."/>
            <person name="Dubin A.E."/>
            <person name="Evans M.J."/>
            <person name="Marr F."/>
            <person name="Schultz P.G."/>
            <person name="Cravatt B.F."/>
            <person name="Patapoutian A."/>
        </authorList>
    </citation>
    <scope>ACTIVITY REGULATION</scope>
    <scope>MUTAGENESIS OF CYS-415; CYS-422 AND CYS-622</scope>
</reference>
<reference key="11">
    <citation type="journal article" date="2011" name="Nat. Chem. Biol.">
        <title>TRPA1 underlies a sensing mechanism for O2.</title>
        <authorList>
            <person name="Takahashi N."/>
            <person name="Kuwaki T."/>
            <person name="Kiyonaka S."/>
            <person name="Numata T."/>
            <person name="Kozai D."/>
            <person name="Mizuno Y."/>
            <person name="Yamamoto S."/>
            <person name="Naito S."/>
            <person name="Knevels E."/>
            <person name="Carmeliet P."/>
            <person name="Oga T."/>
            <person name="Kaneko S."/>
            <person name="Suga S."/>
            <person name="Nokami T."/>
            <person name="Yoshida J."/>
            <person name="Mori Y."/>
        </authorList>
    </citation>
    <scope>SUBUNIT</scope>
    <scope>TISSUE SPECIFICITY</scope>
</reference>
<reference key="12">
    <citation type="journal article" date="2012" name="J. Biol. Chem.">
        <title>Identification of in vivo disulfide conformation of TRPA1 ion channel.</title>
        <authorList>
            <person name="Wang L."/>
            <person name="Cvetkov T.L."/>
            <person name="Chance M.R."/>
            <person name="Moiseenkova-Bell V.Y."/>
        </authorList>
    </citation>
    <scope>DISULFIDE BONDS</scope>
</reference>
<reference key="13">
    <citation type="journal article" date="2013" name="J. Immunol.">
        <title>TRPA1-dependent pruritus in IL-13-induced chronic atopic dermatitis.</title>
        <authorList>
            <person name="Oh M.H."/>
            <person name="Oh S.Y."/>
            <person name="Lu J."/>
            <person name="Lou H."/>
            <person name="Myers A.C."/>
            <person name="Zhu Z."/>
            <person name="Zheng T."/>
        </authorList>
    </citation>
    <scope>FUNCTION</scope>
</reference>
<reference key="14">
    <citation type="journal article" date="2011" name="J. Biol. Chem.">
        <title>Molecular architecture and subunit organization of TRPA1 ion channel revealed by electron microscopy.</title>
        <authorList>
            <person name="Cvetkov T.L."/>
            <person name="Huynh K.W."/>
            <person name="Cohen M.R."/>
            <person name="Moiseenkova-Bell V.Y."/>
        </authorList>
    </citation>
    <scope>STRUCTURE BY ELECTRON MICROSCOPY (16 ANGSTROMS)</scope>
    <scope>SUBUNIT</scope>
</reference>
<reference key="15">
    <citation type="journal article" date="2015" name="Neuron">
        <title>Tmem100 Is a regulator of TRPA1-TRPV1 complex and contributes to persistent pain.</title>
        <authorList>
            <person name="Weng H.J."/>
            <person name="Patel K.N."/>
            <person name="Jeske N.A."/>
            <person name="Bierbower S.M."/>
            <person name="Zou W."/>
            <person name="Tiwari V."/>
            <person name="Zheng Q."/>
            <person name="Tang Z."/>
            <person name="Mo G.C."/>
            <person name="Wang Y."/>
            <person name="Geng Y."/>
            <person name="Zhang J."/>
            <person name="Guan Y."/>
            <person name="Akopian A.N."/>
            <person name="Dong X."/>
        </authorList>
    </citation>
    <scope>INTERACTION WITH TMEM100</scope>
</reference>
<reference key="16">
    <citation type="journal article" date="2018" name="J. Gen. Physiol.">
        <title>Structural insights into the molecular mechanism of mouse TRPA1 activation and inhibition.</title>
        <authorList>
            <person name="Samanta A."/>
            <person name="Kiselar J."/>
            <person name="Pumroy R.A."/>
            <person name="Han S."/>
            <person name="Moiseenkova-Bell V.Y."/>
        </authorList>
    </citation>
    <scope>ACTIVITY REGULATION</scope>
</reference>
<reference key="17">
    <citation type="journal article" date="2019" name="Cell">
        <title>A cell-penetrating scorpion toxin enables mode-specific modulation of TRPA1 and pain.</title>
        <authorList>
            <person name="Lin King J.V."/>
            <person name="Emrick J.J."/>
            <person name="Kelly M.J.S."/>
            <person name="Herzig V."/>
            <person name="King G.F."/>
            <person name="Medzihradszky K.F."/>
            <person name="Julius D."/>
        </authorList>
    </citation>
    <scope>ACTIVITY REGULATION</scope>
</reference>
<protein>
    <recommendedName>
        <fullName evidence="23">Transient receptor potential cation channel subfamily A member 1</fullName>
    </recommendedName>
    <alternativeName>
        <fullName evidence="1">Ankyrin-like with transmembrane domains protein 1</fullName>
    </alternativeName>
    <alternativeName>
        <fullName evidence="20">Wasabi receptor</fullName>
    </alternativeName>
</protein>
<comment type="function">
    <text evidence="1 4 5 7 8 9 15">Ligand-activated Ca(2+)-permeable, nonselective cation channel (By similarity). Involved in pain detection and possibly also in cold perception, oxygen concentration perception, cough, itch, and inner ear function (PubMed:12654248, PubMed:15843607, PubMed:16564016, PubMed:24140646). Has a relatively high Ca(2+) selectivity, with a preference for divalent over monovalent cations (Ca(2+) &gt; Ba(2+) &gt; Mg(2+) &gt; NH4(+) &gt; Li(+) &gt; K(+)), the influx of cation into the cytoplasm, leads to membrane depolarization. Has a central role in the pain response to endogenous inflammatory mediators, such as bradykinin and to a diverse array of irritants (PubMed:15046718). Activated by a large variety of structurally unrelated electrophilic and non-electrophilic chemical compounds, such as allylthiocyanate (AITC) from mustard oil or wasabi, cinnamaldehyde, diallyl disulfide (DADS) from garlic, and acrolein, an environmental irritant. Electrophilic ligands activate TRPA1 by interacting with critical N-terminal Cys residues in a covalent manner. Non-electrophile agonists bind at distinct sites in the transmembrane domain to promote channel activation. Also acts as an ionotropic cannabinoid receptor by being activated by delta(9)-tetrahydrocannabinol (THC), the psychoactive component of marijuana (By similarity). May be a component for the mechanosensitive transduction channel of hair cells in inner ear, thereby participating in the perception of sounds (PubMed:15483558).</text>
</comment>
<comment type="catalytic activity">
    <reaction evidence="1">
        <text>Ca(2+)(in) = Ca(2+)(out)</text>
        <dbReference type="Rhea" id="RHEA:29671"/>
        <dbReference type="ChEBI" id="CHEBI:29108"/>
    </reaction>
</comment>
<comment type="catalytic activity">
    <reaction evidence="1">
        <text>Mg(2+)(in) = Mg(2+)(out)</text>
        <dbReference type="Rhea" id="RHEA:29827"/>
        <dbReference type="ChEBI" id="CHEBI:18420"/>
    </reaction>
</comment>
<comment type="catalytic activity">
    <reaction evidence="1">
        <text>Na(+)(in) = Na(+)(out)</text>
        <dbReference type="Rhea" id="RHEA:34963"/>
        <dbReference type="ChEBI" id="CHEBI:29101"/>
    </reaction>
</comment>
<comment type="catalytic activity">
    <reaction evidence="1">
        <text>K(+)(in) = K(+)(out)</text>
        <dbReference type="Rhea" id="RHEA:29463"/>
        <dbReference type="ChEBI" id="CHEBI:29103"/>
    </reaction>
</comment>
<comment type="catalytic activity">
    <reaction evidence="1">
        <text>Zn(2+)(in) = Zn(2+)(out)</text>
        <dbReference type="Rhea" id="RHEA:29351"/>
        <dbReference type="ChEBI" id="CHEBI:29105"/>
    </reaction>
</comment>
<comment type="activity regulation">
    <text evidence="1 2 8 10 11 17 18">Electrophilic ligands activate the channel by covalent modification of intracellular cysteines (PubMed:17237762). Cys-622 plays a key role in covalent binding of electrophiles (By similarity). Extracellular Ca(2+) both potentiates and inactivates TRPA1; a rapid potentiation follows by slow desensitization (By similarity). Activated by increase in intracellular Ca(2+) concentration (By similarity). Inhibited by the potent blocker of TRPV channels ruthenium red, A-967079 (PubMed:15843607, PubMed:29703838, PubMed:31447178). Activated by icilin, sulfhydryl reactive agent MTSEA, N-methyl maleimide (NMM), and PF-4840154 (PubMed:17237762, PubMed:29703838). Also activated by hyperoxia. Activated by intracellular Zn(2+) (By similarity). TRPA1 activation may critically depend on the presence of small intracellular compounds such as polyphosphates (PubMed:17567811).</text>
</comment>
<comment type="subunit">
    <text evidence="1 13 16">Homotetramer (PubMed:21908607). Interacts with TMEM100 (PubMed:25640077). Interacts with EGLN1 (PubMed:21873995). Interacts with the scorpion wasabi receptor toxin at the same site that electrophiles but in a non-covalent manner (By similarity).</text>
</comment>
<comment type="subcellular location">
    <subcellularLocation>
        <location evidence="4 5 7 8">Cell membrane</location>
        <topology evidence="1">Multi-pass membrane protein</topology>
    </subcellularLocation>
</comment>
<comment type="tissue specificity">
    <text evidence="4 6 7 8 12">Expressed in inner ear (at protein level). Specifically expressed in a subset of nociceptive neurons. Expressed in the same neurons that TRPV1. In contrast, it is not expressed in neurons expressing TRPM8. Expressed in the superior cervical ganglion of vagus nerve. Expressed in the inferior ganglion (nodose ganglion) of vagus nerve (PubMed:21873995). Expressed in dorsal root ganglia neurons (PubMed:21873995).</text>
</comment>
<comment type="developmental stage">
    <text evidence="7">During utricle development, it is first expressed at 15 dpc and 16 dpc and peaks at 17 dpc. It drops at 18 dpc but increases again at 19 dpc, possibly corresponding to a second wave of hair cells that are generated at 15 dpc.</text>
</comment>
<comment type="domain">
    <text evidence="1">C-terminal helices from the four subunits associate to form atypical coiled coil structure; this region is probably involved in binding the inositol polyphosphates that are required for optimal channel activity (in vitro).</text>
</comment>
<comment type="domain">
    <text evidence="1">The ANK repeat domain consists of a convex stem structure followed by a crescent-shaped structure that surrounds the protein core.</text>
</comment>
<comment type="PTM">
    <text evidence="10 14">TRPA1 activation by electrophiles occurs though covalent modification of specific cysteine residues in the N-terminal cytoplasmic domain (PubMed:17237762, PubMed:22207754).</text>
</comment>
<comment type="PTM">
    <text evidence="1">Hydroxylation is required for TRPA1 activity inhibition in normoxia. In hypoxia, the decrease in oxygen concentration diminishes the activity of the hydroxylase EGLN1, thus relieving TRPA1 from inhibition and ultimately leading to channel activation.</text>
</comment>
<comment type="PTM">
    <text evidence="1">Oxidation of Cys-634 and Cys-859 in hyperoxia may override the hydroxylase EGLN1-mediated inhibition, causing TRPA1 activation.</text>
</comment>
<comment type="disruption phenotype">
    <text evidence="9">Mice display normal cold sensitivity and unimpaired auditory function, suggesting that this channel is not required for the initial detection of noxious cold or sound. However, they exhibit pronounced deficits in bradykinin-evoked nociceptor excitation and pain hypersensitivity.</text>
</comment>
<comment type="similarity">
    <text evidence="21">Belongs to the transient receptor (TC 1.A.4) family.</text>
</comment>
<comment type="online information" name="Protein Spotlight">
    <link uri="https://www.proteinspotlight.org/back_issues/082"/>
    <text>The power behind pain - Issue 82 of May 2007</text>
</comment>
<evidence type="ECO:0000250" key="1">
    <source>
        <dbReference type="UniProtKB" id="O75762"/>
    </source>
</evidence>
<evidence type="ECO:0000250" key="2">
    <source>
        <dbReference type="UniProtKB" id="Q6RI86"/>
    </source>
</evidence>
<evidence type="ECO:0000255" key="3"/>
<evidence type="ECO:0000269" key="4">
    <source>
    </source>
</evidence>
<evidence type="ECO:0000269" key="5">
    <source>
    </source>
</evidence>
<evidence type="ECO:0000269" key="6">
    <source>
    </source>
</evidence>
<evidence type="ECO:0000269" key="7">
    <source>
    </source>
</evidence>
<evidence type="ECO:0000269" key="8">
    <source>
    </source>
</evidence>
<evidence type="ECO:0000269" key="9">
    <source>
    </source>
</evidence>
<evidence type="ECO:0000269" key="10">
    <source>
    </source>
</evidence>
<evidence type="ECO:0000269" key="11">
    <source>
    </source>
</evidence>
<evidence type="ECO:0000269" key="12">
    <source>
    </source>
</evidence>
<evidence type="ECO:0000269" key="13">
    <source>
    </source>
</evidence>
<evidence type="ECO:0000269" key="14">
    <source>
    </source>
</evidence>
<evidence type="ECO:0000269" key="15">
    <source>
    </source>
</evidence>
<evidence type="ECO:0000269" key="16">
    <source>
    </source>
</evidence>
<evidence type="ECO:0000269" key="17">
    <source>
    </source>
</evidence>
<evidence type="ECO:0000269" key="18">
    <source>
    </source>
</evidence>
<evidence type="ECO:0000303" key="19">
    <source>
    </source>
</evidence>
<evidence type="ECO:0000303" key="20">
    <source>
    </source>
</evidence>
<evidence type="ECO:0000305" key="21"/>
<evidence type="ECO:0000305" key="22">
    <source>
    </source>
</evidence>
<evidence type="ECO:0000312" key="23">
    <source>
        <dbReference type="MGI" id="MGI:3522699"/>
    </source>
</evidence>
<sequence>MKRGLRRILLPEERKEVQGVVYRGVGEDMDCSKESFKVDIEGDMCRLEDFIKNRRKLSKYEDENLCPLHHAAAEGQVELMELIINGSSCEVLNIMDGYGNTPLHCAAEKNQVESVKFLLSQGANPNLRNRNMMSPLHIAVHGMYNEVIKVLTEHKATNINLEGENGNTALMSTCAKDNSEALQILLEKGAKLCKSNKWGDYPVHQAAFSGAKKCMELILAYGEKNGYSRETHINFVNHKKASPLHLAVQSGDLDMIKMCLDNGAHIDMMENAKCMALHFAATQGATDIVKLMISSYTGSSDIVNAVDGNQETLLHRASLFDHHDLAEYLISVGADINSTDSEGRSPLILATASASWNIVNLLLCKGAKVDIKDHLGRNFLHLTVQQPYGLRNLRPEFMQMQHIKELVMDEDNDGCTPLHYACRQGVPVSVNNLLGFNVSIHSKSKDKKSPLHFAASYGRINTCQRLLQDISDTRLLNEGDLHGMTPLHLAAKNGHDKVVQLLLKKGALFLSDHNGWTALHHASMGGYTQTMKVILDTNLKCTDRLDEEGNTALHFAAREGHAKAVAMLLSYNADILLNKKQASFLHIALHNKRKEVVLTTIRNKRWDECLQVFTHNSPSNRCPIMEMVEYLPECMKVLLDFCMIPSTEDKSCQDYHIEYNFKYLQCPLSMTKKVAPTQDVVYEPLTILNVMVQHNRIELLNHPVCREYLLMKWCAYGFRAHMMNLGSYCLGLIPMTLLVVKIQPGMAFNSTGIINGTSSTHEERIDTLNSFPIKICMILVFLSSIFGYCKEVIQIFQQKRNYFLDYNNALEWVIYTTSIIFVLPLFLNIPAYMQWQCGAIAIFFYWMNFLLYLQRFENCGIFIVMLEVIFKTLLRSTGVFIFLLLAFGLSFYVLLNFQDAFSTPLLSLIQTFSMMLGDINYRDAFLEPLFRNELAYPVLTFGQLIAFTMFVPIVLMNLLIGLAVGDIAEVQKHASLKRIAMQVELHTNLEKKLPLWYLRKVDQRSTIVYPNRPRHGRMLRFFHYFLNMQETRQEVPNIDTCLEMEILKQKYRLKDLTSLLEKQHELIKLIIQKMEIISETEDEDNHCSFQDRFKKERLEQMHSKWNFVLNAVKTKTHCSISHPDF</sequence>
<organism>
    <name type="scientific">Mus musculus</name>
    <name type="common">Mouse</name>
    <dbReference type="NCBI Taxonomy" id="10090"/>
    <lineage>
        <taxon>Eukaryota</taxon>
        <taxon>Metazoa</taxon>
        <taxon>Chordata</taxon>
        <taxon>Craniata</taxon>
        <taxon>Vertebrata</taxon>
        <taxon>Euteleostomi</taxon>
        <taxon>Mammalia</taxon>
        <taxon>Eutheria</taxon>
        <taxon>Euarchontoglires</taxon>
        <taxon>Glires</taxon>
        <taxon>Rodentia</taxon>
        <taxon>Myomorpha</taxon>
        <taxon>Muroidea</taxon>
        <taxon>Muridae</taxon>
        <taxon>Murinae</taxon>
        <taxon>Mus</taxon>
        <taxon>Mus</taxon>
    </lineage>
</organism>
<name>TRPA1_MOUSE</name>